<sequence>MNSGHSFSQTPSASFHGAGGGWGRPRSFPRAPTVHGGAGGARISLSFTTRSCPPPGGSWGSGRSSPLLGGNGKATMQNLNDRLASYLEKVRALEEANMKLESRILKWHQQRDPGSKKDYSQYEENITHLQEQIVDGKMTNAQIILLIDNARMAVDDFNLKYENEHSFKKDLEIEVEGLRRTLDNLTIVTTDLEQEVEGMRKELILMKKHHEQEMEKHHVPSDFNVNVKVDTGPREDLIKVLEDMRQEYELIIKKKHRDLDTWYKEQSAAMSQEAASPATVQSRQGDIHELKRTFQALEIDLQTQYSTKSALENMLSETQSRYSCKLQDMQEIISHYEEELTQLRHELERQNNEYQVLLGIKTHLEKEITTYRRLLEGESEGTREESKSSMKVSATPKIKAITQETINGRLVLCQVNEIQKHA</sequence>
<keyword id="KW-0025">Alternative splicing</keyword>
<keyword id="KW-0175">Coiled coil</keyword>
<keyword id="KW-0403">Intermediate filament</keyword>
<keyword id="KW-0416">Keratin</keyword>
<keyword id="KW-1267">Proteomics identification</keyword>
<keyword id="KW-1185">Reference proteome</keyword>
<gene>
    <name type="primary">KRT23</name>
</gene>
<proteinExistence type="evidence at protein level"/>
<reference key="1">
    <citation type="journal article" date="2001" name="Genes Chromosomes Cancer">
        <title>Keratin 23 (K23), a novel acidic keratin, is highly induced by histone deacetylase inhibitors during differentiation of pancreatic cancer cells.</title>
        <authorList>
            <person name="Zhang J.-S."/>
            <person name="Wang L."/>
            <person name="Huang H."/>
            <person name="Nelson M."/>
            <person name="Smith D.I."/>
        </authorList>
    </citation>
    <scope>NUCLEOTIDE SEQUENCE [MRNA] (ISOFORM 1)</scope>
</reference>
<reference key="2">
    <citation type="journal article" date="2004" name="Nat. Genet.">
        <title>Complete sequencing and characterization of 21,243 full-length human cDNAs.</title>
        <authorList>
            <person name="Ota T."/>
            <person name="Suzuki Y."/>
            <person name="Nishikawa T."/>
            <person name="Otsuki T."/>
            <person name="Sugiyama T."/>
            <person name="Irie R."/>
            <person name="Wakamatsu A."/>
            <person name="Hayashi K."/>
            <person name="Sato H."/>
            <person name="Nagai K."/>
            <person name="Kimura K."/>
            <person name="Makita H."/>
            <person name="Sekine M."/>
            <person name="Obayashi M."/>
            <person name="Nishi T."/>
            <person name="Shibahara T."/>
            <person name="Tanaka T."/>
            <person name="Ishii S."/>
            <person name="Yamamoto J."/>
            <person name="Saito K."/>
            <person name="Kawai Y."/>
            <person name="Isono Y."/>
            <person name="Nakamura Y."/>
            <person name="Nagahari K."/>
            <person name="Murakami K."/>
            <person name="Yasuda T."/>
            <person name="Iwayanagi T."/>
            <person name="Wagatsuma M."/>
            <person name="Shiratori A."/>
            <person name="Sudo H."/>
            <person name="Hosoiri T."/>
            <person name="Kaku Y."/>
            <person name="Kodaira H."/>
            <person name="Kondo H."/>
            <person name="Sugawara M."/>
            <person name="Takahashi M."/>
            <person name="Kanda K."/>
            <person name="Yokoi T."/>
            <person name="Furuya T."/>
            <person name="Kikkawa E."/>
            <person name="Omura Y."/>
            <person name="Abe K."/>
            <person name="Kamihara K."/>
            <person name="Katsuta N."/>
            <person name="Sato K."/>
            <person name="Tanikawa M."/>
            <person name="Yamazaki M."/>
            <person name="Ninomiya K."/>
            <person name="Ishibashi T."/>
            <person name="Yamashita H."/>
            <person name="Murakawa K."/>
            <person name="Fujimori K."/>
            <person name="Tanai H."/>
            <person name="Kimata M."/>
            <person name="Watanabe M."/>
            <person name="Hiraoka S."/>
            <person name="Chiba Y."/>
            <person name="Ishida S."/>
            <person name="Ono Y."/>
            <person name="Takiguchi S."/>
            <person name="Watanabe S."/>
            <person name="Yosida M."/>
            <person name="Hotuta T."/>
            <person name="Kusano J."/>
            <person name="Kanehori K."/>
            <person name="Takahashi-Fujii A."/>
            <person name="Hara H."/>
            <person name="Tanase T.-O."/>
            <person name="Nomura Y."/>
            <person name="Togiya S."/>
            <person name="Komai F."/>
            <person name="Hara R."/>
            <person name="Takeuchi K."/>
            <person name="Arita M."/>
            <person name="Imose N."/>
            <person name="Musashino K."/>
            <person name="Yuuki H."/>
            <person name="Oshima A."/>
            <person name="Sasaki N."/>
            <person name="Aotsuka S."/>
            <person name="Yoshikawa Y."/>
            <person name="Matsunawa H."/>
            <person name="Ichihara T."/>
            <person name="Shiohata N."/>
            <person name="Sano S."/>
            <person name="Moriya S."/>
            <person name="Momiyama H."/>
            <person name="Satoh N."/>
            <person name="Takami S."/>
            <person name="Terashima Y."/>
            <person name="Suzuki O."/>
            <person name="Nakagawa S."/>
            <person name="Senoh A."/>
            <person name="Mizoguchi H."/>
            <person name="Goto Y."/>
            <person name="Shimizu F."/>
            <person name="Wakebe H."/>
            <person name="Hishigaki H."/>
            <person name="Watanabe T."/>
            <person name="Sugiyama A."/>
            <person name="Takemoto M."/>
            <person name="Kawakami B."/>
            <person name="Yamazaki M."/>
            <person name="Watanabe K."/>
            <person name="Kumagai A."/>
            <person name="Itakura S."/>
            <person name="Fukuzumi Y."/>
            <person name="Fujimori Y."/>
            <person name="Komiyama M."/>
            <person name="Tashiro H."/>
            <person name="Tanigami A."/>
            <person name="Fujiwara T."/>
            <person name="Ono T."/>
            <person name="Yamada K."/>
            <person name="Fujii Y."/>
            <person name="Ozaki K."/>
            <person name="Hirao M."/>
            <person name="Ohmori Y."/>
            <person name="Kawabata A."/>
            <person name="Hikiji T."/>
            <person name="Kobatake N."/>
            <person name="Inagaki H."/>
            <person name="Ikema Y."/>
            <person name="Okamoto S."/>
            <person name="Okitani R."/>
            <person name="Kawakami T."/>
            <person name="Noguchi S."/>
            <person name="Itoh T."/>
            <person name="Shigeta K."/>
            <person name="Senba T."/>
            <person name="Matsumura K."/>
            <person name="Nakajima Y."/>
            <person name="Mizuno T."/>
            <person name="Morinaga M."/>
            <person name="Sasaki M."/>
            <person name="Togashi T."/>
            <person name="Oyama M."/>
            <person name="Hata H."/>
            <person name="Watanabe M."/>
            <person name="Komatsu T."/>
            <person name="Mizushima-Sugano J."/>
            <person name="Satoh T."/>
            <person name="Shirai Y."/>
            <person name="Takahashi Y."/>
            <person name="Nakagawa K."/>
            <person name="Okumura K."/>
            <person name="Nagase T."/>
            <person name="Nomura N."/>
            <person name="Kikuchi H."/>
            <person name="Masuho Y."/>
            <person name="Yamashita R."/>
            <person name="Nakai K."/>
            <person name="Yada T."/>
            <person name="Nakamura Y."/>
            <person name="Ohara O."/>
            <person name="Isogai T."/>
            <person name="Sugano S."/>
        </authorList>
    </citation>
    <scope>NUCLEOTIDE SEQUENCE [LARGE SCALE MRNA] (ISOFORM 2)</scope>
    <scope>VARIANT ALA-303</scope>
    <source>
        <tissue>Placenta</tissue>
        <tissue>Testis</tissue>
        <tissue>Urinary bladder</tissue>
    </source>
</reference>
<reference key="3">
    <citation type="journal article" date="2006" name="Nature">
        <title>DNA sequence of human chromosome 17 and analysis of rearrangement in the human lineage.</title>
        <authorList>
            <person name="Zody M.C."/>
            <person name="Garber M."/>
            <person name="Adams D.J."/>
            <person name="Sharpe T."/>
            <person name="Harrow J."/>
            <person name="Lupski J.R."/>
            <person name="Nicholson C."/>
            <person name="Searle S.M."/>
            <person name="Wilming L."/>
            <person name="Young S.K."/>
            <person name="Abouelleil A."/>
            <person name="Allen N.R."/>
            <person name="Bi W."/>
            <person name="Bloom T."/>
            <person name="Borowsky M.L."/>
            <person name="Bugalter B.E."/>
            <person name="Butler J."/>
            <person name="Chang J.L."/>
            <person name="Chen C.-K."/>
            <person name="Cook A."/>
            <person name="Corum B."/>
            <person name="Cuomo C.A."/>
            <person name="de Jong P.J."/>
            <person name="DeCaprio D."/>
            <person name="Dewar K."/>
            <person name="FitzGerald M."/>
            <person name="Gilbert J."/>
            <person name="Gibson R."/>
            <person name="Gnerre S."/>
            <person name="Goldstein S."/>
            <person name="Grafham D.V."/>
            <person name="Grocock R."/>
            <person name="Hafez N."/>
            <person name="Hagopian D.S."/>
            <person name="Hart E."/>
            <person name="Norman C.H."/>
            <person name="Humphray S."/>
            <person name="Jaffe D.B."/>
            <person name="Jones M."/>
            <person name="Kamal M."/>
            <person name="Khodiyar V.K."/>
            <person name="LaButti K."/>
            <person name="Laird G."/>
            <person name="Lehoczky J."/>
            <person name="Liu X."/>
            <person name="Lokyitsang T."/>
            <person name="Loveland J."/>
            <person name="Lui A."/>
            <person name="Macdonald P."/>
            <person name="Major J.E."/>
            <person name="Matthews L."/>
            <person name="Mauceli E."/>
            <person name="McCarroll S.A."/>
            <person name="Mihalev A.H."/>
            <person name="Mudge J."/>
            <person name="Nguyen C."/>
            <person name="Nicol R."/>
            <person name="O'Leary S.B."/>
            <person name="Osoegawa K."/>
            <person name="Schwartz D.C."/>
            <person name="Shaw-Smith C."/>
            <person name="Stankiewicz P."/>
            <person name="Steward C."/>
            <person name="Swarbreck D."/>
            <person name="Venkataraman V."/>
            <person name="Whittaker C.A."/>
            <person name="Yang X."/>
            <person name="Zimmer A.R."/>
            <person name="Bradley A."/>
            <person name="Hubbard T."/>
            <person name="Birren B.W."/>
            <person name="Rogers J."/>
            <person name="Lander E.S."/>
            <person name="Nusbaum C."/>
        </authorList>
    </citation>
    <scope>NUCLEOTIDE SEQUENCE [LARGE SCALE GENOMIC DNA]</scope>
</reference>
<reference key="4">
    <citation type="journal article" date="2011" name="BMC Syst. Biol.">
        <title>Initial characterization of the human central proteome.</title>
        <authorList>
            <person name="Burkard T.R."/>
            <person name="Planyavsky M."/>
            <person name="Kaupe I."/>
            <person name="Breitwieser F.P."/>
            <person name="Buerckstuemmer T."/>
            <person name="Bennett K.L."/>
            <person name="Superti-Furga G."/>
            <person name="Colinge J."/>
        </authorList>
    </citation>
    <scope>IDENTIFICATION BY MASS SPECTROMETRY [LARGE SCALE ANALYSIS]</scope>
</reference>
<name>K1C23_HUMAN</name>
<dbReference type="EMBL" id="AF102848">
    <property type="protein sequence ID" value="AAK00050.1"/>
    <property type="molecule type" value="mRNA"/>
</dbReference>
<dbReference type="EMBL" id="AK002047">
    <property type="protein sequence ID" value="BAA92054.1"/>
    <property type="molecule type" value="mRNA"/>
</dbReference>
<dbReference type="EMBL" id="AK289449">
    <property type="protein sequence ID" value="BAF82138.1"/>
    <property type="molecule type" value="mRNA"/>
</dbReference>
<dbReference type="EMBL" id="AK302109">
    <property type="protein sequence ID" value="BAH13628.1"/>
    <property type="molecule type" value="mRNA"/>
</dbReference>
<dbReference type="EMBL" id="AC004231">
    <property type="status" value="NOT_ANNOTATED_CDS"/>
    <property type="molecule type" value="Genomic_DNA"/>
</dbReference>
<dbReference type="CCDS" id="CCDS11380.1">
    <molecule id="Q9C075-1"/>
</dbReference>
<dbReference type="CCDS" id="CCDS62182.1">
    <molecule id="Q9C075-2"/>
</dbReference>
<dbReference type="RefSeq" id="NP_001269362.1">
    <molecule id="Q9C075-2"/>
    <property type="nucleotide sequence ID" value="NM_001282433.2"/>
</dbReference>
<dbReference type="RefSeq" id="NP_056330.3">
    <molecule id="Q9C075-1"/>
    <property type="nucleotide sequence ID" value="NM_015515.4"/>
</dbReference>
<dbReference type="RefSeq" id="XP_005257257.1">
    <molecule id="Q9C075-2"/>
    <property type="nucleotide sequence ID" value="XM_005257200.6"/>
</dbReference>
<dbReference type="RefSeq" id="XP_011522897.1">
    <molecule id="Q9C075-2"/>
    <property type="nucleotide sequence ID" value="XM_011524595.3"/>
</dbReference>
<dbReference type="RefSeq" id="XP_047291682.1">
    <molecule id="Q9C075-1"/>
    <property type="nucleotide sequence ID" value="XM_047435726.1"/>
</dbReference>
<dbReference type="RefSeq" id="XP_047291683.1">
    <molecule id="Q9C075-1"/>
    <property type="nucleotide sequence ID" value="XM_047435727.1"/>
</dbReference>
<dbReference type="RefSeq" id="XP_047291684.1">
    <molecule id="Q9C075-1"/>
    <property type="nucleotide sequence ID" value="XM_047435728.1"/>
</dbReference>
<dbReference type="RefSeq" id="XP_047291685.1">
    <molecule id="Q9C075-1"/>
    <property type="nucleotide sequence ID" value="XM_047435729.1"/>
</dbReference>
<dbReference type="RefSeq" id="XP_054185684.1">
    <molecule id="Q9C075-1"/>
    <property type="nucleotide sequence ID" value="XM_054329709.1"/>
</dbReference>
<dbReference type="RefSeq" id="XP_054185685.1">
    <molecule id="Q9C075-1"/>
    <property type="nucleotide sequence ID" value="XM_054329710.1"/>
</dbReference>
<dbReference type="RefSeq" id="XP_054185686.1">
    <molecule id="Q9C075-1"/>
    <property type="nucleotide sequence ID" value="XM_054329711.1"/>
</dbReference>
<dbReference type="RefSeq" id="XP_054185687.1">
    <molecule id="Q9C075-1"/>
    <property type="nucleotide sequence ID" value="XM_054329712.1"/>
</dbReference>
<dbReference type="RefSeq" id="XP_054185688.1">
    <molecule id="Q9C075-1"/>
    <property type="nucleotide sequence ID" value="XM_054329713.1"/>
</dbReference>
<dbReference type="RefSeq" id="XP_054185689.1">
    <molecule id="Q9C075-2"/>
    <property type="nucleotide sequence ID" value="XM_054329714.1"/>
</dbReference>
<dbReference type="RefSeq" id="XP_054185690.1">
    <molecule id="Q9C075-2"/>
    <property type="nucleotide sequence ID" value="XM_054329715.1"/>
</dbReference>
<dbReference type="SMR" id="Q9C075"/>
<dbReference type="BioGRID" id="117467">
    <property type="interactions" value="31"/>
</dbReference>
<dbReference type="FunCoup" id="Q9C075">
    <property type="interactions" value="273"/>
</dbReference>
<dbReference type="IntAct" id="Q9C075">
    <property type="interactions" value="20"/>
</dbReference>
<dbReference type="STRING" id="9606.ENSP00000209718"/>
<dbReference type="GlyGen" id="Q9C075">
    <property type="glycosylation" value="1 site, 1 O-linked glycan (1 site)"/>
</dbReference>
<dbReference type="iPTMnet" id="Q9C075"/>
<dbReference type="PhosphoSitePlus" id="Q9C075"/>
<dbReference type="SwissPalm" id="Q9C075"/>
<dbReference type="BioMuta" id="KRT23"/>
<dbReference type="DMDM" id="143811410"/>
<dbReference type="jPOST" id="Q9C075"/>
<dbReference type="MassIVE" id="Q9C075"/>
<dbReference type="PaxDb" id="9606-ENSP00000209718"/>
<dbReference type="PeptideAtlas" id="Q9C075"/>
<dbReference type="ProteomicsDB" id="47295"/>
<dbReference type="ProteomicsDB" id="79963">
    <molecule id="Q9C075-1"/>
</dbReference>
<dbReference type="Antibodypedia" id="1978">
    <property type="antibodies" value="289 antibodies from 29 providers"/>
</dbReference>
<dbReference type="DNASU" id="25984"/>
<dbReference type="Ensembl" id="ENST00000209718.8">
    <molecule id="Q9C075-1"/>
    <property type="protein sequence ID" value="ENSP00000209718.3"/>
    <property type="gene ID" value="ENSG00000108244.17"/>
</dbReference>
<dbReference type="Ensembl" id="ENST00000436344.7">
    <molecule id="Q9C075-2"/>
    <property type="protein sequence ID" value="ENSP00000414056.3"/>
    <property type="gene ID" value="ENSG00000108244.17"/>
</dbReference>
<dbReference type="Ensembl" id="ENST00000571258.6">
    <molecule id="Q9C075-2"/>
    <property type="protein sequence ID" value="ENSP00000460637.2"/>
    <property type="gene ID" value="ENSG00000263309.6"/>
</dbReference>
<dbReference type="Ensembl" id="ENST00000574480.5">
    <molecule id="Q9C075-1"/>
    <property type="protein sequence ID" value="ENSP00000459021.1"/>
    <property type="gene ID" value="ENSG00000263309.6"/>
</dbReference>
<dbReference type="GeneID" id="25984"/>
<dbReference type="KEGG" id="hsa:25984"/>
<dbReference type="MANE-Select" id="ENST00000209718.8">
    <property type="protein sequence ID" value="ENSP00000209718.3"/>
    <property type="RefSeq nucleotide sequence ID" value="NM_015515.5"/>
    <property type="RefSeq protein sequence ID" value="NP_056330.3"/>
</dbReference>
<dbReference type="UCSC" id="uc002hvm.3">
    <molecule id="Q9C075-1"/>
    <property type="organism name" value="human"/>
</dbReference>
<dbReference type="AGR" id="HGNC:6438"/>
<dbReference type="CTD" id="25984"/>
<dbReference type="DisGeNET" id="25984"/>
<dbReference type="GeneCards" id="KRT23"/>
<dbReference type="HGNC" id="HGNC:6438">
    <property type="gene designation" value="KRT23"/>
</dbReference>
<dbReference type="HPA" id="ENSG00000108244">
    <property type="expression patterns" value="Group enriched (salivary gland, skin)"/>
</dbReference>
<dbReference type="MIM" id="606194">
    <property type="type" value="gene"/>
</dbReference>
<dbReference type="neXtProt" id="NX_Q9C075"/>
<dbReference type="OpenTargets" id="ENSG00000108244"/>
<dbReference type="PharmGKB" id="PA134914537"/>
<dbReference type="VEuPathDB" id="HostDB:ENSG00000108244"/>
<dbReference type="eggNOG" id="ENOG502QTH0">
    <property type="taxonomic scope" value="Eukaryota"/>
</dbReference>
<dbReference type="GeneTree" id="ENSGT00940000161077"/>
<dbReference type="HOGENOM" id="CLU_012560_8_1_1"/>
<dbReference type="InParanoid" id="Q9C075"/>
<dbReference type="OMA" id="SCILEWH"/>
<dbReference type="OrthoDB" id="2441647at2759"/>
<dbReference type="PAN-GO" id="Q9C075">
    <property type="GO annotations" value="3 GO annotations based on evolutionary models"/>
</dbReference>
<dbReference type="PhylomeDB" id="Q9C075"/>
<dbReference type="TreeFam" id="TF332742"/>
<dbReference type="PathwayCommons" id="Q9C075"/>
<dbReference type="Reactome" id="R-HSA-6805567">
    <property type="pathway name" value="Keratinization"/>
</dbReference>
<dbReference type="Reactome" id="R-HSA-6809371">
    <property type="pathway name" value="Formation of the cornified envelope"/>
</dbReference>
<dbReference type="SignaLink" id="Q9C075"/>
<dbReference type="BioGRID-ORCS" id="25984">
    <property type="hits" value="15 hits in 1139 CRISPR screens"/>
</dbReference>
<dbReference type="ChiTaRS" id="KRT23">
    <property type="organism name" value="human"/>
</dbReference>
<dbReference type="GeneWiki" id="KRT23"/>
<dbReference type="GenomeRNAi" id="25984"/>
<dbReference type="Pharos" id="Q9C075">
    <property type="development level" value="Tbio"/>
</dbReference>
<dbReference type="PRO" id="PR:Q9C075"/>
<dbReference type="Proteomes" id="UP000005640">
    <property type="component" value="Chromosome 17"/>
</dbReference>
<dbReference type="RNAct" id="Q9C075">
    <property type="molecule type" value="protein"/>
</dbReference>
<dbReference type="Bgee" id="ENSG00000108244">
    <property type="expression patterns" value="Expressed in placenta and 93 other cell types or tissues"/>
</dbReference>
<dbReference type="ExpressionAtlas" id="Q9C075">
    <property type="expression patterns" value="baseline and differential"/>
</dbReference>
<dbReference type="GO" id="GO:0005856">
    <property type="term" value="C:cytoskeleton"/>
    <property type="evidence" value="ECO:0000318"/>
    <property type="project" value="GO_Central"/>
</dbReference>
<dbReference type="GO" id="GO:0005829">
    <property type="term" value="C:cytosol"/>
    <property type="evidence" value="ECO:0000304"/>
    <property type="project" value="Reactome"/>
</dbReference>
<dbReference type="GO" id="GO:0005882">
    <property type="term" value="C:intermediate filament"/>
    <property type="evidence" value="ECO:0007669"/>
    <property type="project" value="UniProtKB-KW"/>
</dbReference>
<dbReference type="GO" id="GO:0005198">
    <property type="term" value="F:structural molecule activity"/>
    <property type="evidence" value="ECO:0007669"/>
    <property type="project" value="InterPro"/>
</dbReference>
<dbReference type="GO" id="GO:0030855">
    <property type="term" value="P:epithelial cell differentiation"/>
    <property type="evidence" value="ECO:0000318"/>
    <property type="project" value="GO_Central"/>
</dbReference>
<dbReference type="GO" id="GO:0045109">
    <property type="term" value="P:intermediate filament organization"/>
    <property type="evidence" value="ECO:0000318"/>
    <property type="project" value="GO_Central"/>
</dbReference>
<dbReference type="FunFam" id="1.20.5.170:FF:000002">
    <property type="entry name" value="Type I keratin KA11"/>
    <property type="match status" value="1"/>
</dbReference>
<dbReference type="Gene3D" id="1.20.5.170">
    <property type="match status" value="1"/>
</dbReference>
<dbReference type="Gene3D" id="1.20.5.500">
    <property type="entry name" value="Single helix bin"/>
    <property type="match status" value="1"/>
</dbReference>
<dbReference type="Gene3D" id="1.20.5.1160">
    <property type="entry name" value="Vasodilator-stimulated phosphoprotein"/>
    <property type="match status" value="1"/>
</dbReference>
<dbReference type="InterPro" id="IPR018039">
    <property type="entry name" value="IF_conserved"/>
</dbReference>
<dbReference type="InterPro" id="IPR039008">
    <property type="entry name" value="IF_rod_dom"/>
</dbReference>
<dbReference type="InterPro" id="IPR002957">
    <property type="entry name" value="Keratin_I"/>
</dbReference>
<dbReference type="PANTHER" id="PTHR23239">
    <property type="entry name" value="INTERMEDIATE FILAMENT"/>
    <property type="match status" value="1"/>
</dbReference>
<dbReference type="PANTHER" id="PTHR23239:SF44">
    <property type="entry name" value="KERATIN, TYPE I CYTOSKELETAL 23"/>
    <property type="match status" value="1"/>
</dbReference>
<dbReference type="Pfam" id="PF00038">
    <property type="entry name" value="Filament"/>
    <property type="match status" value="1"/>
</dbReference>
<dbReference type="PRINTS" id="PR01248">
    <property type="entry name" value="TYPE1KERATIN"/>
</dbReference>
<dbReference type="SMART" id="SM01391">
    <property type="entry name" value="Filament"/>
    <property type="match status" value="1"/>
</dbReference>
<dbReference type="SUPFAM" id="SSF64593">
    <property type="entry name" value="Intermediate filament protein, coiled coil region"/>
    <property type="match status" value="2"/>
</dbReference>
<dbReference type="PROSITE" id="PS00226">
    <property type="entry name" value="IF_ROD_1"/>
    <property type="match status" value="1"/>
</dbReference>
<dbReference type="PROSITE" id="PS51842">
    <property type="entry name" value="IF_ROD_2"/>
    <property type="match status" value="1"/>
</dbReference>
<feature type="chain" id="PRO_0000063677" description="Keratin, type I cytoskeletal 23">
    <location>
        <begin position="1"/>
        <end position="422"/>
    </location>
</feature>
<feature type="domain" description="IF rod" evidence="2">
    <location>
        <begin position="72"/>
        <end position="382"/>
    </location>
</feature>
<feature type="region of interest" description="Disordered" evidence="3">
    <location>
        <begin position="1"/>
        <end position="73"/>
    </location>
</feature>
<feature type="region of interest" description="Head">
    <location>
        <begin position="1"/>
        <end position="71"/>
    </location>
</feature>
<feature type="region of interest" description="Coil 1A">
    <location>
        <begin position="72"/>
        <end position="107"/>
    </location>
</feature>
<feature type="region of interest" description="Linker 1">
    <location>
        <begin position="108"/>
        <end position="125"/>
    </location>
</feature>
<feature type="region of interest" description="Coil 1B">
    <location>
        <begin position="126"/>
        <end position="217"/>
    </location>
</feature>
<feature type="region of interest" description="Linker 12">
    <location>
        <begin position="218"/>
        <end position="240"/>
    </location>
</feature>
<feature type="region of interest" description="Coil 2">
    <location>
        <begin position="241"/>
        <end position="378"/>
    </location>
</feature>
<feature type="region of interest" description="Rod-like helical tail">
    <location>
        <begin position="379"/>
        <end position="422"/>
    </location>
</feature>
<feature type="compositionally biased region" description="Polar residues" evidence="3">
    <location>
        <begin position="1"/>
        <end position="13"/>
    </location>
</feature>
<feature type="splice variant" id="VSP_055662" description="In isoform 2." evidence="5">
    <location>
        <begin position="1"/>
        <end position="137"/>
    </location>
</feature>
<feature type="sequence variant" id="VAR_031608" description="In dbSNP:rs9257." evidence="4">
    <original>T</original>
    <variation>A</variation>
    <location>
        <position position="303"/>
    </location>
</feature>
<feature type="sequence variant" id="VAR_049785" description="In dbSNP:rs17856805.">
    <original>S</original>
    <variation>F</variation>
    <location>
        <position position="393"/>
    </location>
</feature>
<feature type="sequence conflict" description="In Ref. 1; AAK00050." evidence="6" ref="1">
    <original>K</original>
    <variation>N</variation>
    <location>
        <position position="137"/>
    </location>
</feature>
<feature type="sequence conflict" description="In Ref. 2; BAA92054." evidence="6" ref="2">
    <original>K</original>
    <variation>E</variation>
    <location>
        <position position="208"/>
    </location>
</feature>
<feature type="sequence conflict" description="In Ref. 2; BAA92054." evidence="6" ref="2">
    <original>K</original>
    <variation>E</variation>
    <location>
        <position position="216"/>
    </location>
</feature>
<feature type="sequence conflict" description="In Ref. 1; AAK00050." evidence="6" ref="1">
    <original>Y</original>
    <variation>N</variation>
    <location>
        <position position="322"/>
    </location>
</feature>
<accession>Q9C075</accession>
<accession>A8K084</accession>
<accession>B7Z7J2</accession>
<accession>I3L3Q6</accession>
<accession>Q9NUR6</accession>
<protein>
    <recommendedName>
        <fullName>Keratin, type I cytoskeletal 23</fullName>
    </recommendedName>
    <alternativeName>
        <fullName>Cytokeratin-23</fullName>
        <shortName>CK-23</shortName>
    </alternativeName>
    <alternativeName>
        <fullName>Keratin-23</fullName>
        <shortName>K23</shortName>
    </alternativeName>
</protein>
<evidence type="ECO:0000250" key="1"/>
<evidence type="ECO:0000255" key="2">
    <source>
        <dbReference type="PROSITE-ProRule" id="PRU01188"/>
    </source>
</evidence>
<evidence type="ECO:0000256" key="3">
    <source>
        <dbReference type="SAM" id="MobiDB-lite"/>
    </source>
</evidence>
<evidence type="ECO:0000269" key="4">
    <source>
    </source>
</evidence>
<evidence type="ECO:0000303" key="5">
    <source>
    </source>
</evidence>
<evidence type="ECO:0000305" key="6"/>
<comment type="subunit">
    <text evidence="1">Heterotetramer of two type I and two type II keratins.</text>
</comment>
<comment type="interaction">
    <interactant intactId="EBI-3211278">
        <id>Q9C075</id>
    </interactant>
    <interactant intactId="EBI-11984663">
        <id>Q06455-2</id>
        <label>RUNX1T1</label>
    </interactant>
    <organismsDiffer>false</organismsDiffer>
    <experiments>3</experiments>
</comment>
<comment type="alternative products">
    <event type="alternative splicing"/>
    <isoform>
        <id>Q9C075-1</id>
        <name>1</name>
        <sequence type="displayed"/>
    </isoform>
    <isoform>
        <id>Q9C075-2</id>
        <name>2</name>
        <sequence type="described" ref="VSP_055662"/>
    </isoform>
</comment>
<comment type="miscellaneous">
    <text>There are two types of cytoskeletal and microfibrillar keratin: I (acidic; 40-55 kDa) and II (neutral to basic; 56-70 kDa).</text>
</comment>
<comment type="similarity">
    <text evidence="2">Belongs to the intermediate filament family.</text>
</comment>
<organism>
    <name type="scientific">Homo sapiens</name>
    <name type="common">Human</name>
    <dbReference type="NCBI Taxonomy" id="9606"/>
    <lineage>
        <taxon>Eukaryota</taxon>
        <taxon>Metazoa</taxon>
        <taxon>Chordata</taxon>
        <taxon>Craniata</taxon>
        <taxon>Vertebrata</taxon>
        <taxon>Euteleostomi</taxon>
        <taxon>Mammalia</taxon>
        <taxon>Eutheria</taxon>
        <taxon>Euarchontoglires</taxon>
        <taxon>Primates</taxon>
        <taxon>Haplorrhini</taxon>
        <taxon>Catarrhini</taxon>
        <taxon>Hominidae</taxon>
        <taxon>Homo</taxon>
    </lineage>
</organism>